<organism>
    <name type="scientific">Prochlorococcus marinus (strain AS9601)</name>
    <dbReference type="NCBI Taxonomy" id="146891"/>
    <lineage>
        <taxon>Bacteria</taxon>
        <taxon>Bacillati</taxon>
        <taxon>Cyanobacteriota</taxon>
        <taxon>Cyanophyceae</taxon>
        <taxon>Synechococcales</taxon>
        <taxon>Prochlorococcaceae</taxon>
        <taxon>Prochlorococcus</taxon>
    </lineage>
</organism>
<protein>
    <recommendedName>
        <fullName evidence="1">Polyamine aminopropyltransferase</fullName>
    </recommendedName>
    <alternativeName>
        <fullName evidence="1">Putrescine aminopropyltransferase</fullName>
        <shortName evidence="1">PAPT</shortName>
    </alternativeName>
    <alternativeName>
        <fullName evidence="1">Spermidine synthase</fullName>
        <shortName evidence="1">SPDS</shortName>
        <shortName evidence="1">SPDSY</shortName>
        <ecNumber evidence="1">2.5.1.16</ecNumber>
    </alternativeName>
</protein>
<feature type="chain" id="PRO_1000012010" description="Polyamine aminopropyltransferase">
    <location>
        <begin position="1"/>
        <end position="283"/>
    </location>
</feature>
<feature type="domain" description="PABS" evidence="1">
    <location>
        <begin position="5"/>
        <end position="238"/>
    </location>
</feature>
<feature type="active site" description="Proton acceptor" evidence="1">
    <location>
        <position position="158"/>
    </location>
</feature>
<feature type="binding site" evidence="1">
    <location>
        <position position="32"/>
    </location>
    <ligand>
        <name>S-methyl-5'-thioadenosine</name>
        <dbReference type="ChEBI" id="CHEBI:17509"/>
    </ligand>
</feature>
<feature type="binding site" evidence="1">
    <location>
        <position position="63"/>
    </location>
    <ligand>
        <name>spermidine</name>
        <dbReference type="ChEBI" id="CHEBI:57834"/>
    </ligand>
</feature>
<feature type="binding site" evidence="1">
    <location>
        <position position="87"/>
    </location>
    <ligand>
        <name>spermidine</name>
        <dbReference type="ChEBI" id="CHEBI:57834"/>
    </ligand>
</feature>
<feature type="binding site" evidence="1">
    <location>
        <position position="107"/>
    </location>
    <ligand>
        <name>S-methyl-5'-thioadenosine</name>
        <dbReference type="ChEBI" id="CHEBI:17509"/>
    </ligand>
</feature>
<feature type="binding site" evidence="1">
    <location>
        <begin position="139"/>
        <end position="140"/>
    </location>
    <ligand>
        <name>S-methyl-5'-thioadenosine</name>
        <dbReference type="ChEBI" id="CHEBI:17509"/>
    </ligand>
</feature>
<feature type="binding site" evidence="1">
    <location>
        <begin position="158"/>
        <end position="161"/>
    </location>
    <ligand>
        <name>spermidine</name>
        <dbReference type="ChEBI" id="CHEBI:57834"/>
    </ligand>
</feature>
<keyword id="KW-0963">Cytoplasm</keyword>
<keyword id="KW-0620">Polyamine biosynthesis</keyword>
<keyword id="KW-0745">Spermidine biosynthesis</keyword>
<keyword id="KW-0808">Transferase</keyword>
<accession>A2BTR7</accession>
<gene>
    <name evidence="1" type="primary">speE</name>
    <name type="ordered locus">A9601_18951</name>
</gene>
<reference key="1">
    <citation type="journal article" date="2007" name="PLoS Genet.">
        <title>Patterns and implications of gene gain and loss in the evolution of Prochlorococcus.</title>
        <authorList>
            <person name="Kettler G.C."/>
            <person name="Martiny A.C."/>
            <person name="Huang K."/>
            <person name="Zucker J."/>
            <person name="Coleman M.L."/>
            <person name="Rodrigue S."/>
            <person name="Chen F."/>
            <person name="Lapidus A."/>
            <person name="Ferriera S."/>
            <person name="Johnson J."/>
            <person name="Steglich C."/>
            <person name="Church G.M."/>
            <person name="Richardson P."/>
            <person name="Chisholm S.W."/>
        </authorList>
    </citation>
    <scope>NUCLEOTIDE SEQUENCE [LARGE SCALE GENOMIC DNA]</scope>
    <source>
        <strain>AS9601</strain>
    </source>
</reference>
<comment type="function">
    <text evidence="1">Catalyzes the irreversible transfer of a propylamine group from the amino donor S-adenosylmethioninamine (decarboxy-AdoMet) to putrescine (1,4-diaminobutane) to yield spermidine.</text>
</comment>
<comment type="catalytic activity">
    <reaction evidence="1">
        <text>S-adenosyl 3-(methylsulfanyl)propylamine + putrescine = S-methyl-5'-thioadenosine + spermidine + H(+)</text>
        <dbReference type="Rhea" id="RHEA:12721"/>
        <dbReference type="ChEBI" id="CHEBI:15378"/>
        <dbReference type="ChEBI" id="CHEBI:17509"/>
        <dbReference type="ChEBI" id="CHEBI:57443"/>
        <dbReference type="ChEBI" id="CHEBI:57834"/>
        <dbReference type="ChEBI" id="CHEBI:326268"/>
        <dbReference type="EC" id="2.5.1.16"/>
    </reaction>
</comment>
<comment type="pathway">
    <text evidence="1">Amine and polyamine biosynthesis; spermidine biosynthesis; spermidine from putrescine: step 1/1.</text>
</comment>
<comment type="subunit">
    <text evidence="1">Homodimer or homotetramer.</text>
</comment>
<comment type="subcellular location">
    <subcellularLocation>
        <location evidence="1">Cytoplasm</location>
    </subcellularLocation>
</comment>
<comment type="similarity">
    <text evidence="1">Belongs to the spermidine/spermine synthase family.</text>
</comment>
<sequence length="283" mass="32588">MTDITTWIDEYHKGSRFGLNGKILFKKTSKYQEIIVIENEYYGKALMLDGCWMTSLKDEKYYHECLVHPALSSIDEKSNVLIIGGGDGGTVRECVKYSKISKIDLVEIDEEVIKISKKFLKEIAGEAWNDKRLEIHIDDGVKWVEKTKDNFYDVIFIDCSDPSEFSNLLFSHSFYKECERILAPSGILATQSESPESFKNIHINILKSLKNIFKVSETMYSFVPIYPSGIWSWTFASSEDLSLSKQNYDEVVKIEKGCEIWNLNFQNAAFKMMPNKIVKELDS</sequence>
<evidence type="ECO:0000255" key="1">
    <source>
        <dbReference type="HAMAP-Rule" id="MF_00198"/>
    </source>
</evidence>
<proteinExistence type="inferred from homology"/>
<name>SPEE_PROMS</name>
<dbReference type="EC" id="2.5.1.16" evidence="1"/>
<dbReference type="EMBL" id="CP000551">
    <property type="protein sequence ID" value="ABM71178.1"/>
    <property type="molecule type" value="Genomic_DNA"/>
</dbReference>
<dbReference type="RefSeq" id="WP_011819296.1">
    <property type="nucleotide sequence ID" value="NC_008816.1"/>
</dbReference>
<dbReference type="SMR" id="A2BTR7"/>
<dbReference type="STRING" id="146891.A9601_18951"/>
<dbReference type="KEGG" id="pmb:A9601_18951"/>
<dbReference type="eggNOG" id="COG0421">
    <property type="taxonomic scope" value="Bacteria"/>
</dbReference>
<dbReference type="HOGENOM" id="CLU_048199_0_0_3"/>
<dbReference type="OrthoDB" id="9793120at2"/>
<dbReference type="UniPathway" id="UPA00248">
    <property type="reaction ID" value="UER00314"/>
</dbReference>
<dbReference type="Proteomes" id="UP000002590">
    <property type="component" value="Chromosome"/>
</dbReference>
<dbReference type="GO" id="GO:0005737">
    <property type="term" value="C:cytoplasm"/>
    <property type="evidence" value="ECO:0007669"/>
    <property type="project" value="UniProtKB-SubCell"/>
</dbReference>
<dbReference type="GO" id="GO:0004766">
    <property type="term" value="F:spermidine synthase activity"/>
    <property type="evidence" value="ECO:0007669"/>
    <property type="project" value="UniProtKB-UniRule"/>
</dbReference>
<dbReference type="GO" id="GO:0008295">
    <property type="term" value="P:spermidine biosynthetic process"/>
    <property type="evidence" value="ECO:0007669"/>
    <property type="project" value="UniProtKB-UniRule"/>
</dbReference>
<dbReference type="CDD" id="cd02440">
    <property type="entry name" value="AdoMet_MTases"/>
    <property type="match status" value="1"/>
</dbReference>
<dbReference type="Gene3D" id="2.30.140.10">
    <property type="entry name" value="Spermidine synthase, tetramerisation domain"/>
    <property type="match status" value="1"/>
</dbReference>
<dbReference type="Gene3D" id="3.40.50.150">
    <property type="entry name" value="Vaccinia Virus protein VP39"/>
    <property type="match status" value="1"/>
</dbReference>
<dbReference type="HAMAP" id="MF_00198">
    <property type="entry name" value="Spermidine_synth"/>
    <property type="match status" value="1"/>
</dbReference>
<dbReference type="InterPro" id="IPR030374">
    <property type="entry name" value="PABS"/>
</dbReference>
<dbReference type="InterPro" id="IPR030373">
    <property type="entry name" value="PABS_CS"/>
</dbReference>
<dbReference type="InterPro" id="IPR029063">
    <property type="entry name" value="SAM-dependent_MTases_sf"/>
</dbReference>
<dbReference type="InterPro" id="IPR001045">
    <property type="entry name" value="Spermi_synthase"/>
</dbReference>
<dbReference type="InterPro" id="IPR035246">
    <property type="entry name" value="Spermidine_synt_N"/>
</dbReference>
<dbReference type="InterPro" id="IPR037163">
    <property type="entry name" value="Spermidine_synt_N_sf"/>
</dbReference>
<dbReference type="NCBIfam" id="NF002010">
    <property type="entry name" value="PRK00811.1"/>
    <property type="match status" value="1"/>
</dbReference>
<dbReference type="PANTHER" id="PTHR11558:SF11">
    <property type="entry name" value="SPERMIDINE SYNTHASE"/>
    <property type="match status" value="1"/>
</dbReference>
<dbReference type="PANTHER" id="PTHR11558">
    <property type="entry name" value="SPERMIDINE/SPERMINE SYNTHASE"/>
    <property type="match status" value="1"/>
</dbReference>
<dbReference type="Pfam" id="PF17284">
    <property type="entry name" value="Spermine_synt_N"/>
    <property type="match status" value="1"/>
</dbReference>
<dbReference type="Pfam" id="PF01564">
    <property type="entry name" value="Spermine_synth"/>
    <property type="match status" value="1"/>
</dbReference>
<dbReference type="SUPFAM" id="SSF53335">
    <property type="entry name" value="S-adenosyl-L-methionine-dependent methyltransferases"/>
    <property type="match status" value="1"/>
</dbReference>
<dbReference type="PROSITE" id="PS01330">
    <property type="entry name" value="PABS_1"/>
    <property type="match status" value="1"/>
</dbReference>
<dbReference type="PROSITE" id="PS51006">
    <property type="entry name" value="PABS_2"/>
    <property type="match status" value="1"/>
</dbReference>